<organism>
    <name type="scientific">Oryza sativa subsp. indica</name>
    <name type="common">Rice</name>
    <dbReference type="NCBI Taxonomy" id="39946"/>
    <lineage>
        <taxon>Eukaryota</taxon>
        <taxon>Viridiplantae</taxon>
        <taxon>Streptophyta</taxon>
        <taxon>Embryophyta</taxon>
        <taxon>Tracheophyta</taxon>
        <taxon>Spermatophyta</taxon>
        <taxon>Magnoliopsida</taxon>
        <taxon>Liliopsida</taxon>
        <taxon>Poales</taxon>
        <taxon>Poaceae</taxon>
        <taxon>BOP clade</taxon>
        <taxon>Oryzoideae</taxon>
        <taxon>Oryzeae</taxon>
        <taxon>Oryzinae</taxon>
        <taxon>Oryza</taxon>
        <taxon>Oryza sativa</taxon>
    </lineage>
</organism>
<proteinExistence type="evidence at transcript level"/>
<keyword id="KW-0238">DNA-binding</keyword>
<keyword id="KW-0479">Metal-binding</keyword>
<keyword id="KW-0539">Nucleus</keyword>
<keyword id="KW-1185">Reference proteome</keyword>
<keyword id="KW-0804">Transcription</keyword>
<keyword id="KW-0805">Transcription regulation</keyword>
<keyword id="KW-0862">Zinc</keyword>
<keyword id="KW-0863">Zinc-finger</keyword>
<evidence type="ECO:0000250" key="1"/>
<evidence type="ECO:0000255" key="2"/>
<evidence type="ECO:0000255" key="3">
    <source>
        <dbReference type="PROSITE-ProRule" id="PRU00470"/>
    </source>
</evidence>
<evidence type="ECO:0000256" key="4">
    <source>
        <dbReference type="SAM" id="MobiDB-lite"/>
    </source>
</evidence>
<evidence type="ECO:0000269" key="5">
    <source>
    </source>
</evidence>
<evidence type="ECO:0000305" key="6"/>
<accession>A2YX04</accession>
<feature type="chain" id="PRO_0000308243" description="Squamosa promoter-binding-like protein 15">
    <location>
        <begin position="1"/>
        <end position="1140"/>
    </location>
</feature>
<feature type="zinc finger region" description="SBP-type" evidence="3">
    <location>
        <begin position="184"/>
        <end position="261"/>
    </location>
</feature>
<feature type="region of interest" description="Disordered" evidence="4">
    <location>
        <begin position="73"/>
        <end position="112"/>
    </location>
</feature>
<feature type="region of interest" description="Disordered" evidence="4">
    <location>
        <begin position="124"/>
        <end position="177"/>
    </location>
</feature>
<feature type="region of interest" description="Disordered" evidence="4">
    <location>
        <begin position="327"/>
        <end position="382"/>
    </location>
</feature>
<feature type="region of interest" description="Disordered" evidence="4">
    <location>
        <begin position="403"/>
        <end position="472"/>
    </location>
</feature>
<feature type="region of interest" description="Disordered" evidence="4">
    <location>
        <begin position="496"/>
        <end position="517"/>
    </location>
</feature>
<feature type="region of interest" description="Disordered" evidence="4">
    <location>
        <begin position="558"/>
        <end position="597"/>
    </location>
</feature>
<feature type="short sequence motif" description="Bipartite nuclear localization signal" evidence="2">
    <location>
        <begin position="244"/>
        <end position="260"/>
    </location>
</feature>
<feature type="compositionally biased region" description="Low complexity" evidence="4">
    <location>
        <begin position="76"/>
        <end position="100"/>
    </location>
</feature>
<feature type="compositionally biased region" description="Low complexity" evidence="4">
    <location>
        <begin position="125"/>
        <end position="135"/>
    </location>
</feature>
<feature type="compositionally biased region" description="Gly residues" evidence="4">
    <location>
        <begin position="164"/>
        <end position="177"/>
    </location>
</feature>
<feature type="compositionally biased region" description="Polar residues" evidence="4">
    <location>
        <begin position="345"/>
        <end position="375"/>
    </location>
</feature>
<feature type="compositionally biased region" description="Low complexity" evidence="4">
    <location>
        <begin position="403"/>
        <end position="430"/>
    </location>
</feature>
<feature type="compositionally biased region" description="Basic and acidic residues" evidence="4">
    <location>
        <begin position="450"/>
        <end position="466"/>
    </location>
</feature>
<feature type="compositionally biased region" description="Polar residues" evidence="4">
    <location>
        <begin position="496"/>
        <end position="514"/>
    </location>
</feature>
<feature type="compositionally biased region" description="Low complexity" evidence="4">
    <location>
        <begin position="579"/>
        <end position="593"/>
    </location>
</feature>
<feature type="binding site" evidence="3">
    <location>
        <position position="187"/>
    </location>
    <ligand>
        <name>Zn(2+)</name>
        <dbReference type="ChEBI" id="CHEBI:29105"/>
        <label>1</label>
    </ligand>
</feature>
<feature type="binding site" evidence="3">
    <location>
        <position position="192"/>
    </location>
    <ligand>
        <name>Zn(2+)</name>
        <dbReference type="ChEBI" id="CHEBI:29105"/>
        <label>1</label>
    </ligand>
</feature>
<feature type="binding site" evidence="3">
    <location>
        <position position="209"/>
    </location>
    <ligand>
        <name>Zn(2+)</name>
        <dbReference type="ChEBI" id="CHEBI:29105"/>
        <label>1</label>
    </ligand>
</feature>
<feature type="binding site" evidence="3">
    <location>
        <position position="212"/>
    </location>
    <ligand>
        <name>Zn(2+)</name>
        <dbReference type="ChEBI" id="CHEBI:29105"/>
        <label>1</label>
    </ligand>
</feature>
<feature type="binding site" evidence="3">
    <location>
        <position position="228"/>
    </location>
    <ligand>
        <name>Zn(2+)</name>
        <dbReference type="ChEBI" id="CHEBI:29105"/>
        <label>2</label>
    </ligand>
</feature>
<feature type="binding site" evidence="3">
    <location>
        <position position="231"/>
    </location>
    <ligand>
        <name>Zn(2+)</name>
        <dbReference type="ChEBI" id="CHEBI:29105"/>
        <label>2</label>
    </ligand>
</feature>
<feature type="binding site" evidence="3">
    <location>
        <position position="235"/>
    </location>
    <ligand>
        <name>Zn(2+)</name>
        <dbReference type="ChEBI" id="CHEBI:29105"/>
        <label>2</label>
    </ligand>
</feature>
<feature type="binding site" evidence="3">
    <location>
        <position position="247"/>
    </location>
    <ligand>
        <name>Zn(2+)</name>
        <dbReference type="ChEBI" id="CHEBI:29105"/>
        <label>2</label>
    </ligand>
</feature>
<sequence>MQREVGPQVAPPMFLHQIQPLPPHATAAKKRGNPWPAAAVAAAEAKGGGNWNPRMWDWDSRALTAKPSSDALRVNAGLSHHQQQQQQSPPAAAKAAEALRQGGGGSGGLNLQLGLREDAATPMDVSPAATTVSSSPSPPASSAPAQEPVVRPSKRVRSGSPGSASGGGGGGGGGGNSGGGGGSYPMCQVDDCRADLTNAKDYHRRHKVCEIHGKTTKALVGNQMQRFCQQCSRFHPLSEFDEGKRSCRRRLAGHNRRRRKTQPTDVASQLLLPGNQENAANRTQDIVNLITVIARLQGSNVGKLPSIPPIPDKDNLVQIISKINSINNGNSASKSPPSEAVDLNASHSQQQDSVQRTTNGFEKQTNGLDKQTNGFDKQADGFDKQAVPSTMDLLAVLSTALATSNPDSNTSQSQGSSDSSGNNKSKSQSTEPANVVNSHEKSIRVFSATRKNDALERSPEMYKQPDQETPPYLSLRLFGSTEEDVPCKMDTANKYLSSESSNPLDERSPSSSPPVTHKFFPIRSVDEDARIADYGEDIATVEVSTSRAWRAPPLELFKDSERPIENGSPPNPAYQSCYTSTSCSDHSPSTSNSDGQDRTGRIIFKLFGKEPSTIPGNLRGEIVNWLKHSPNEMEGYIRPGCLVLSMYLSMPAIAWDELEENLLQRVNTLVQGSDLDFWRKGRFLVRTDAQLVSYKDGATRLSKSWRTWNTPELTFVSPIAVVGGRKTSLILKGRNLTIPGTQIHCTSTGKYISKEVLCSAYPGTIYDDSGVETFDLPGEPHLILGRYFIEVENRFRGNSFPVIIANSSVCQELRSLEAELEGSQFVDGSSDDQAHDARRLKPKDEVLHFLNELGWLFQKAAASTSAEKSDSSGLDLMYFSTARFRYLLLFSSERDWCSLTKTLLEILAKRSLASDELSQETLEMLSEIHLLNRAVKRKSSHMARLLVQFVVVCPDDSKLYPFLPNVAGPGGLTPLHLAASIEDAVDIVDALTDDPQQIGLSCWHSALDDDGQSPETYAKLRNNNAYNELVAQKLVDRKNNQVTIMVGKEEIHMDQSGNVGEKNKSAIQALQIRSCNQCAILDAGLLRRPMHSRGLLARPYIHSMLAIAAVCVCVCVFMRALLRFNSGRSFKWERLDFGTI</sequence>
<name>SPL15_ORYSI</name>
<protein>
    <recommendedName>
        <fullName>Squamosa promoter-binding-like protein 15</fullName>
    </recommendedName>
</protein>
<gene>
    <name type="primary">SPL15</name>
    <name type="ORF">OsI_028847</name>
</gene>
<reference key="1">
    <citation type="journal article" date="2005" name="PLoS Biol.">
        <title>The genomes of Oryza sativa: a history of duplications.</title>
        <authorList>
            <person name="Yu J."/>
            <person name="Wang J."/>
            <person name="Lin W."/>
            <person name="Li S."/>
            <person name="Li H."/>
            <person name="Zhou J."/>
            <person name="Ni P."/>
            <person name="Dong W."/>
            <person name="Hu S."/>
            <person name="Zeng C."/>
            <person name="Zhang J."/>
            <person name="Zhang Y."/>
            <person name="Li R."/>
            <person name="Xu Z."/>
            <person name="Li S."/>
            <person name="Li X."/>
            <person name="Zheng H."/>
            <person name="Cong L."/>
            <person name="Lin L."/>
            <person name="Yin J."/>
            <person name="Geng J."/>
            <person name="Li G."/>
            <person name="Shi J."/>
            <person name="Liu J."/>
            <person name="Lv H."/>
            <person name="Li J."/>
            <person name="Wang J."/>
            <person name="Deng Y."/>
            <person name="Ran L."/>
            <person name="Shi X."/>
            <person name="Wang X."/>
            <person name="Wu Q."/>
            <person name="Li C."/>
            <person name="Ren X."/>
            <person name="Wang J."/>
            <person name="Wang X."/>
            <person name="Li D."/>
            <person name="Liu D."/>
            <person name="Zhang X."/>
            <person name="Ji Z."/>
            <person name="Zhao W."/>
            <person name="Sun Y."/>
            <person name="Zhang Z."/>
            <person name="Bao J."/>
            <person name="Han Y."/>
            <person name="Dong L."/>
            <person name="Ji J."/>
            <person name="Chen P."/>
            <person name="Wu S."/>
            <person name="Liu J."/>
            <person name="Xiao Y."/>
            <person name="Bu D."/>
            <person name="Tan J."/>
            <person name="Yang L."/>
            <person name="Ye C."/>
            <person name="Zhang J."/>
            <person name="Xu J."/>
            <person name="Zhou Y."/>
            <person name="Yu Y."/>
            <person name="Zhang B."/>
            <person name="Zhuang S."/>
            <person name="Wei H."/>
            <person name="Liu B."/>
            <person name="Lei M."/>
            <person name="Yu H."/>
            <person name="Li Y."/>
            <person name="Xu H."/>
            <person name="Wei S."/>
            <person name="He X."/>
            <person name="Fang L."/>
            <person name="Zhang Z."/>
            <person name="Zhang Y."/>
            <person name="Huang X."/>
            <person name="Su Z."/>
            <person name="Tong W."/>
            <person name="Li J."/>
            <person name="Tong Z."/>
            <person name="Li S."/>
            <person name="Ye J."/>
            <person name="Wang L."/>
            <person name="Fang L."/>
            <person name="Lei T."/>
            <person name="Chen C.-S."/>
            <person name="Chen H.-C."/>
            <person name="Xu Z."/>
            <person name="Li H."/>
            <person name="Huang H."/>
            <person name="Zhang F."/>
            <person name="Xu H."/>
            <person name="Li N."/>
            <person name="Zhao C."/>
            <person name="Li S."/>
            <person name="Dong L."/>
            <person name="Huang Y."/>
            <person name="Li L."/>
            <person name="Xi Y."/>
            <person name="Qi Q."/>
            <person name="Li W."/>
            <person name="Zhang B."/>
            <person name="Hu W."/>
            <person name="Zhang Y."/>
            <person name="Tian X."/>
            <person name="Jiao Y."/>
            <person name="Liang X."/>
            <person name="Jin J."/>
            <person name="Gao L."/>
            <person name="Zheng W."/>
            <person name="Hao B."/>
            <person name="Liu S.-M."/>
            <person name="Wang W."/>
            <person name="Yuan L."/>
            <person name="Cao M."/>
            <person name="McDermott J."/>
            <person name="Samudrala R."/>
            <person name="Wang J."/>
            <person name="Wong G.K.-S."/>
            <person name="Yang H."/>
        </authorList>
    </citation>
    <scope>NUCLEOTIDE SEQUENCE [LARGE SCALE GENOMIC DNA]</scope>
    <source>
        <strain>cv. 93-11</strain>
    </source>
</reference>
<reference key="2">
    <citation type="journal article" date="2006" name="Plant Physiol.">
        <title>Genomic organization, differential expression, and interaction of SQUAMOSA promoter-binding-like transcription factors and microRNA156 in rice.</title>
        <authorList>
            <person name="Xie K."/>
            <person name="Wu C."/>
            <person name="Xiong L."/>
        </authorList>
    </citation>
    <scope>TISSUE SPECIFICITY</scope>
    <scope>GENE FAMILY</scope>
    <scope>NOMENCLATURE</scope>
</reference>
<reference key="3">
    <citation type="journal article" date="2008" name="Gene">
        <title>Comparative study of SBP-box gene family in Arabidopsis and rice.</title>
        <authorList>
            <person name="Yang Z."/>
            <person name="Wang X."/>
            <person name="Gu S."/>
            <person name="Hu Z."/>
            <person name="Xu H."/>
            <person name="Xu C."/>
        </authorList>
    </citation>
    <scope>GENE FAMILY</scope>
</reference>
<comment type="function">
    <text evidence="1">Trans-acting factor that binds specifically to the consensus nucleotide sequence 5'-TNCGTACAA-3'.</text>
</comment>
<comment type="subcellular location">
    <subcellularLocation>
        <location evidence="6">Nucleus</location>
    </subcellularLocation>
</comment>
<comment type="tissue specificity">
    <text evidence="5">Expressed in stems, leaf sheaths, and young panicles.</text>
</comment>
<comment type="domain">
    <text evidence="1">The SBP-type zinc finger is required for the binding to DNA.</text>
</comment>
<dbReference type="EMBL" id="CM000133">
    <property type="protein sequence ID" value="EAZ07615.1"/>
    <property type="molecule type" value="Genomic_DNA"/>
</dbReference>
<dbReference type="STRING" id="39946.A2YX04"/>
<dbReference type="EnsemblPlants" id="BGIOSGA028994-TA">
    <property type="protein sequence ID" value="BGIOSGA028994-PA"/>
    <property type="gene ID" value="BGIOSGA028994"/>
</dbReference>
<dbReference type="EnsemblPlants" id="OsMH63_08G021920_01">
    <property type="protein sequence ID" value="OsMH63_08G021920_01"/>
    <property type="gene ID" value="OsMH63_08G021920"/>
</dbReference>
<dbReference type="EnsemblPlants" id="OsPr106_08g0021840.01">
    <property type="protein sequence ID" value="OsPr106_08g0021840.01"/>
    <property type="gene ID" value="OsPr106_08g0021840"/>
</dbReference>
<dbReference type="EnsemblPlants" id="OsZS97_08G021760_01">
    <property type="protein sequence ID" value="OsZS97_08G021760_01"/>
    <property type="gene ID" value="OsZS97_08G021760"/>
</dbReference>
<dbReference type="Gramene" id="BGIOSGA028994-TA">
    <property type="protein sequence ID" value="BGIOSGA028994-PA"/>
    <property type="gene ID" value="BGIOSGA028994"/>
</dbReference>
<dbReference type="Gramene" id="OsMH63_08G021920_01">
    <property type="protein sequence ID" value="OsMH63_08G021920_01"/>
    <property type="gene ID" value="OsMH63_08G021920"/>
</dbReference>
<dbReference type="Gramene" id="OsPr106_08g0021840.01">
    <property type="protein sequence ID" value="OsPr106_08g0021840.01"/>
    <property type="gene ID" value="OsPr106_08g0021840"/>
</dbReference>
<dbReference type="Gramene" id="OsZS97_08G021760_01">
    <property type="protein sequence ID" value="OsZS97_08G021760_01"/>
    <property type="gene ID" value="OsZS97_08G021760"/>
</dbReference>
<dbReference type="HOGENOM" id="CLU_006255_0_0_1"/>
<dbReference type="OMA" id="APPIFIH"/>
<dbReference type="Proteomes" id="UP000007015">
    <property type="component" value="Chromosome 8"/>
</dbReference>
<dbReference type="GO" id="GO:0005634">
    <property type="term" value="C:nucleus"/>
    <property type="evidence" value="ECO:0007669"/>
    <property type="project" value="UniProtKB-SubCell"/>
</dbReference>
<dbReference type="GO" id="GO:0003677">
    <property type="term" value="F:DNA binding"/>
    <property type="evidence" value="ECO:0007669"/>
    <property type="project" value="UniProtKB-KW"/>
</dbReference>
<dbReference type="GO" id="GO:0008270">
    <property type="term" value="F:zinc ion binding"/>
    <property type="evidence" value="ECO:0007669"/>
    <property type="project" value="UniProtKB-KW"/>
</dbReference>
<dbReference type="FunFam" id="4.10.1100.10:FF:000001">
    <property type="entry name" value="Squamosa promoter-binding-like protein 14"/>
    <property type="match status" value="1"/>
</dbReference>
<dbReference type="Gene3D" id="4.10.1100.10">
    <property type="entry name" value="Transcription factor, SBP-box domain"/>
    <property type="match status" value="1"/>
</dbReference>
<dbReference type="InterPro" id="IPR044817">
    <property type="entry name" value="SBP-like"/>
</dbReference>
<dbReference type="InterPro" id="IPR004333">
    <property type="entry name" value="SBP_dom"/>
</dbReference>
<dbReference type="InterPro" id="IPR036893">
    <property type="entry name" value="SBP_sf"/>
</dbReference>
<dbReference type="PANTHER" id="PTHR31251:SF196">
    <property type="entry name" value="SQUAMOSA PROMOTER-BINDING-LIKE PROTEIN 15"/>
    <property type="match status" value="1"/>
</dbReference>
<dbReference type="PANTHER" id="PTHR31251">
    <property type="entry name" value="SQUAMOSA PROMOTER-BINDING-LIKE PROTEIN 4"/>
    <property type="match status" value="1"/>
</dbReference>
<dbReference type="Pfam" id="PF03110">
    <property type="entry name" value="SBP"/>
    <property type="match status" value="1"/>
</dbReference>
<dbReference type="SUPFAM" id="SSF103612">
    <property type="entry name" value="SBT domain"/>
    <property type="match status" value="1"/>
</dbReference>
<dbReference type="PROSITE" id="PS51141">
    <property type="entry name" value="ZF_SBP"/>
    <property type="match status" value="1"/>
</dbReference>